<proteinExistence type="evidence at protein level"/>
<reference key="1">
    <citation type="journal article" date="2000" name="Nature">
        <title>Sequence and analysis of chromosome 3 of the plant Arabidopsis thaliana.</title>
        <authorList>
            <person name="Salanoubat M."/>
            <person name="Lemcke K."/>
            <person name="Rieger M."/>
            <person name="Ansorge W."/>
            <person name="Unseld M."/>
            <person name="Fartmann B."/>
            <person name="Valle G."/>
            <person name="Bloecker H."/>
            <person name="Perez-Alonso M."/>
            <person name="Obermaier B."/>
            <person name="Delseny M."/>
            <person name="Boutry M."/>
            <person name="Grivell L.A."/>
            <person name="Mache R."/>
            <person name="Puigdomenech P."/>
            <person name="De Simone V."/>
            <person name="Choisne N."/>
            <person name="Artiguenave F."/>
            <person name="Robert C."/>
            <person name="Brottier P."/>
            <person name="Wincker P."/>
            <person name="Cattolico L."/>
            <person name="Weissenbach J."/>
            <person name="Saurin W."/>
            <person name="Quetier F."/>
            <person name="Schaefer M."/>
            <person name="Mueller-Auer S."/>
            <person name="Gabel C."/>
            <person name="Fuchs M."/>
            <person name="Benes V."/>
            <person name="Wurmbach E."/>
            <person name="Drzonek H."/>
            <person name="Erfle H."/>
            <person name="Jordan N."/>
            <person name="Bangert S."/>
            <person name="Wiedelmann R."/>
            <person name="Kranz H."/>
            <person name="Voss H."/>
            <person name="Holland R."/>
            <person name="Brandt P."/>
            <person name="Nyakatura G."/>
            <person name="Vezzi A."/>
            <person name="D'Angelo M."/>
            <person name="Pallavicini A."/>
            <person name="Toppo S."/>
            <person name="Simionati B."/>
            <person name="Conrad A."/>
            <person name="Hornischer K."/>
            <person name="Kauer G."/>
            <person name="Loehnert T.-H."/>
            <person name="Nordsiek G."/>
            <person name="Reichelt J."/>
            <person name="Scharfe M."/>
            <person name="Schoen O."/>
            <person name="Bargues M."/>
            <person name="Terol J."/>
            <person name="Climent J."/>
            <person name="Navarro P."/>
            <person name="Collado C."/>
            <person name="Perez-Perez A."/>
            <person name="Ottenwaelder B."/>
            <person name="Duchemin D."/>
            <person name="Cooke R."/>
            <person name="Laudie M."/>
            <person name="Berger-Llauro C."/>
            <person name="Purnelle B."/>
            <person name="Masuy D."/>
            <person name="de Haan M."/>
            <person name="Maarse A.C."/>
            <person name="Alcaraz J.-P."/>
            <person name="Cottet A."/>
            <person name="Casacuberta E."/>
            <person name="Monfort A."/>
            <person name="Argiriou A."/>
            <person name="Flores M."/>
            <person name="Liguori R."/>
            <person name="Vitale D."/>
            <person name="Mannhaupt G."/>
            <person name="Haase D."/>
            <person name="Schoof H."/>
            <person name="Rudd S."/>
            <person name="Zaccaria P."/>
            <person name="Mewes H.-W."/>
            <person name="Mayer K.F.X."/>
            <person name="Kaul S."/>
            <person name="Town C.D."/>
            <person name="Koo H.L."/>
            <person name="Tallon L.J."/>
            <person name="Jenkins J."/>
            <person name="Rooney T."/>
            <person name="Rizzo M."/>
            <person name="Walts A."/>
            <person name="Utterback T."/>
            <person name="Fujii C.Y."/>
            <person name="Shea T.P."/>
            <person name="Creasy T.H."/>
            <person name="Haas B."/>
            <person name="Maiti R."/>
            <person name="Wu D."/>
            <person name="Peterson J."/>
            <person name="Van Aken S."/>
            <person name="Pai G."/>
            <person name="Militscher J."/>
            <person name="Sellers P."/>
            <person name="Gill J.E."/>
            <person name="Feldblyum T.V."/>
            <person name="Preuss D."/>
            <person name="Lin X."/>
            <person name="Nierman W.C."/>
            <person name="Salzberg S.L."/>
            <person name="White O."/>
            <person name="Venter J.C."/>
            <person name="Fraser C.M."/>
            <person name="Kaneko T."/>
            <person name="Nakamura Y."/>
            <person name="Sato S."/>
            <person name="Kato T."/>
            <person name="Asamizu E."/>
            <person name="Sasamoto S."/>
            <person name="Kimura T."/>
            <person name="Idesawa K."/>
            <person name="Kawashima K."/>
            <person name="Kishida Y."/>
            <person name="Kiyokawa C."/>
            <person name="Kohara M."/>
            <person name="Matsumoto M."/>
            <person name="Matsuno A."/>
            <person name="Muraki A."/>
            <person name="Nakayama S."/>
            <person name="Nakazaki N."/>
            <person name="Shinpo S."/>
            <person name="Takeuchi C."/>
            <person name="Wada T."/>
            <person name="Watanabe A."/>
            <person name="Yamada M."/>
            <person name="Yasuda M."/>
            <person name="Tabata S."/>
        </authorList>
    </citation>
    <scope>NUCLEOTIDE SEQUENCE [LARGE SCALE GENOMIC DNA]</scope>
    <source>
        <strain>cv. Columbia</strain>
    </source>
</reference>
<reference key="2">
    <citation type="journal article" date="2017" name="Plant J.">
        <title>Araport11: a complete reannotation of the Arabidopsis thaliana reference genome.</title>
        <authorList>
            <person name="Cheng C.Y."/>
            <person name="Krishnakumar V."/>
            <person name="Chan A.P."/>
            <person name="Thibaud-Nissen F."/>
            <person name="Schobel S."/>
            <person name="Town C.D."/>
        </authorList>
    </citation>
    <scope>GENOME REANNOTATION</scope>
    <source>
        <strain>cv. Columbia</strain>
    </source>
</reference>
<reference key="3">
    <citation type="journal article" date="2003" name="Science">
        <title>Empirical analysis of transcriptional activity in the Arabidopsis genome.</title>
        <authorList>
            <person name="Yamada K."/>
            <person name="Lim J."/>
            <person name="Dale J.M."/>
            <person name="Chen H."/>
            <person name="Shinn P."/>
            <person name="Palm C.J."/>
            <person name="Southwick A.M."/>
            <person name="Wu H.C."/>
            <person name="Kim C.J."/>
            <person name="Nguyen M."/>
            <person name="Pham P.K."/>
            <person name="Cheuk R.F."/>
            <person name="Karlin-Newmann G."/>
            <person name="Liu S.X."/>
            <person name="Lam B."/>
            <person name="Sakano H."/>
            <person name="Wu T."/>
            <person name="Yu G."/>
            <person name="Miranda M."/>
            <person name="Quach H.L."/>
            <person name="Tripp M."/>
            <person name="Chang C.H."/>
            <person name="Lee J.M."/>
            <person name="Toriumi M.J."/>
            <person name="Chan M.M."/>
            <person name="Tang C.C."/>
            <person name="Onodera C.S."/>
            <person name="Deng J.M."/>
            <person name="Akiyama K."/>
            <person name="Ansari Y."/>
            <person name="Arakawa T."/>
            <person name="Banh J."/>
            <person name="Banno F."/>
            <person name="Bowser L."/>
            <person name="Brooks S.Y."/>
            <person name="Carninci P."/>
            <person name="Chao Q."/>
            <person name="Choy N."/>
            <person name="Enju A."/>
            <person name="Goldsmith A.D."/>
            <person name="Gurjal M."/>
            <person name="Hansen N.F."/>
            <person name="Hayashizaki Y."/>
            <person name="Johnson-Hopson C."/>
            <person name="Hsuan V.W."/>
            <person name="Iida K."/>
            <person name="Karnes M."/>
            <person name="Khan S."/>
            <person name="Koesema E."/>
            <person name="Ishida J."/>
            <person name="Jiang P.X."/>
            <person name="Jones T."/>
            <person name="Kawai J."/>
            <person name="Kamiya A."/>
            <person name="Meyers C."/>
            <person name="Nakajima M."/>
            <person name="Narusaka M."/>
            <person name="Seki M."/>
            <person name="Sakurai T."/>
            <person name="Satou M."/>
            <person name="Tamse R."/>
            <person name="Vaysberg M."/>
            <person name="Wallender E.K."/>
            <person name="Wong C."/>
            <person name="Yamamura Y."/>
            <person name="Yuan S."/>
            <person name="Shinozaki K."/>
            <person name="Davis R.W."/>
            <person name="Theologis A."/>
            <person name="Ecker J.R."/>
        </authorList>
    </citation>
    <scope>NUCLEOTIDE SEQUENCE [LARGE SCALE MRNA]</scope>
    <source>
        <strain>cv. Columbia</strain>
    </source>
</reference>
<reference key="4">
    <citation type="submission" date="2002-03" db="EMBL/GenBank/DDBJ databases">
        <title>Full-length cDNA from Arabidopsis thaliana.</title>
        <authorList>
            <person name="Brover V.V."/>
            <person name="Troukhan M.E."/>
            <person name="Alexandrov N.A."/>
            <person name="Lu Y.-P."/>
            <person name="Flavell R.B."/>
            <person name="Feldmann K.A."/>
        </authorList>
    </citation>
    <scope>NUCLEOTIDE SEQUENCE [LARGE SCALE MRNA]</scope>
</reference>
<comment type="function">
    <text evidence="1">Involved in nucleolar processing of pre-18S ribosomal RNA.</text>
</comment>
<comment type="subunit">
    <text evidence="1">Component of the ribosomal small subunit (SSU) processome.</text>
</comment>
<comment type="interaction">
    <interactant intactId="EBI-4436982">
        <id>Q9M223</id>
    </interactant>
    <interactant intactId="EBI-4473692">
        <id>O80575</id>
        <label>At2g44050</label>
    </interactant>
    <organismsDiffer>false</organismsDiffer>
    <experiments>3</experiments>
</comment>
<comment type="interaction">
    <interactant intactId="EBI-4436982">
        <id>Q9M223</id>
    </interactant>
    <interactant intactId="EBI-4424126">
        <id>Q9M155</id>
        <label>At4g01090</label>
    </interactant>
    <organismsDiffer>false</organismsDiffer>
    <experiments>2</experiments>
</comment>
<comment type="interaction">
    <interactant intactId="EBI-4436982">
        <id>Q9M223</id>
    </interactant>
    <interactant intactId="EBI-25506855">
        <id>O23160</id>
        <label>MYB73</label>
    </interactant>
    <organismsDiffer>false</organismsDiffer>
    <experiments>3</experiments>
</comment>
<comment type="subcellular location">
    <subcellularLocation>
        <location evidence="1">Nucleus</location>
        <location evidence="1">Nucleolus</location>
    </subcellularLocation>
</comment>
<comment type="similarity">
    <text evidence="3">Belongs to the UTP11 family.</text>
</comment>
<protein>
    <recommendedName>
        <fullName>Probable U3 small nucleolar RNA-associated protein 11</fullName>
        <shortName>U3 snoRNA-associated protein 11</shortName>
    </recommendedName>
</protein>
<accession>Q9M223</accession>
<keyword id="KW-0539">Nucleus</keyword>
<keyword id="KW-1185">Reference proteome</keyword>
<keyword id="KW-0698">rRNA processing</keyword>
<feature type="chain" id="PRO_0000211049" description="Probable U3 small nucleolar RNA-associated protein 11">
    <location>
        <begin position="1"/>
        <end position="228"/>
    </location>
</feature>
<feature type="region of interest" description="Disordered" evidence="2">
    <location>
        <begin position="1"/>
        <end position="23"/>
    </location>
</feature>
<feature type="region of interest" description="Disordered" evidence="2">
    <location>
        <begin position="192"/>
        <end position="211"/>
    </location>
</feature>
<feature type="compositionally biased region" description="Basic and acidic residues" evidence="2">
    <location>
        <begin position="12"/>
        <end position="23"/>
    </location>
</feature>
<organism>
    <name type="scientific">Arabidopsis thaliana</name>
    <name type="common">Mouse-ear cress</name>
    <dbReference type="NCBI Taxonomy" id="3702"/>
    <lineage>
        <taxon>Eukaryota</taxon>
        <taxon>Viridiplantae</taxon>
        <taxon>Streptophyta</taxon>
        <taxon>Embryophyta</taxon>
        <taxon>Tracheophyta</taxon>
        <taxon>Spermatophyta</taxon>
        <taxon>Magnoliopsida</taxon>
        <taxon>eudicotyledons</taxon>
        <taxon>Gunneridae</taxon>
        <taxon>Pentapetalae</taxon>
        <taxon>rosids</taxon>
        <taxon>malvids</taxon>
        <taxon>Brassicales</taxon>
        <taxon>Brassicaceae</taxon>
        <taxon>Camelineae</taxon>
        <taxon>Arabidopsis</taxon>
    </lineage>
</organism>
<gene>
    <name type="ordered locus">At3g60360</name>
    <name type="ORF">T8B10_20</name>
</gene>
<evidence type="ECO:0000250" key="1"/>
<evidence type="ECO:0000256" key="2">
    <source>
        <dbReference type="SAM" id="MobiDB-lite"/>
    </source>
</evidence>
<evidence type="ECO:0000305" key="3"/>
<sequence>MSSLRNAIPRPAHKERSQPEARKRFGILEKHKDYIIRANAYHKKQETLKILRQKAAFKNPDEFNFKMINSKTVDGRHRPKDEVNKYSAEELMIMKTQDIGYVFQKWQSEKNKIDKLTASLQCTGDQSSRRHVYYAEDREEARELEVQGRSKSDISTVEIPKDIKKKMDRSYRDLEGRKSRAKDLEKLYTDMSMQKELQKKGRKRKLRDDELLNPNGKAVYKWRADRKR</sequence>
<dbReference type="EMBL" id="AL138646">
    <property type="protein sequence ID" value="CAB81822.1"/>
    <property type="molecule type" value="Genomic_DNA"/>
</dbReference>
<dbReference type="EMBL" id="CP002686">
    <property type="protein sequence ID" value="AEE80051.1"/>
    <property type="molecule type" value="Genomic_DNA"/>
</dbReference>
<dbReference type="EMBL" id="AY039876">
    <property type="protein sequence ID" value="AAK63980.1"/>
    <property type="molecule type" value="mRNA"/>
</dbReference>
<dbReference type="EMBL" id="AY101514">
    <property type="protein sequence ID" value="AAM26635.1"/>
    <property type="molecule type" value="mRNA"/>
</dbReference>
<dbReference type="EMBL" id="BT000725">
    <property type="protein sequence ID" value="AAN31867.1"/>
    <property type="molecule type" value="mRNA"/>
</dbReference>
<dbReference type="EMBL" id="AY085156">
    <property type="protein sequence ID" value="AAM61709.1"/>
    <property type="molecule type" value="mRNA"/>
</dbReference>
<dbReference type="PIR" id="T47847">
    <property type="entry name" value="T47847"/>
</dbReference>
<dbReference type="SMR" id="Q9M223"/>
<dbReference type="BioGRID" id="10521">
    <property type="interactions" value="20"/>
</dbReference>
<dbReference type="FunCoup" id="Q9M223">
    <property type="interactions" value="3345"/>
</dbReference>
<dbReference type="IntAct" id="Q9M223">
    <property type="interactions" value="28"/>
</dbReference>
<dbReference type="STRING" id="3702.Q9M223"/>
<dbReference type="iPTMnet" id="Q9M223"/>
<dbReference type="PaxDb" id="3702-AT3G60360.1"/>
<dbReference type="ProteomicsDB" id="228700"/>
<dbReference type="EnsemblPlants" id="AT3G60360.1">
    <property type="protein sequence ID" value="AT3G60360.1"/>
    <property type="gene ID" value="AT3G60360"/>
</dbReference>
<dbReference type="Gramene" id="AT3G60360.1">
    <property type="protein sequence ID" value="AT3G60360.1"/>
    <property type="gene ID" value="AT3G60360"/>
</dbReference>
<dbReference type="KEGG" id="ath:AT3G60360"/>
<dbReference type="Araport" id="AT3G60360"/>
<dbReference type="TAIR" id="AT3G60360">
    <property type="gene designation" value="EDA14"/>
</dbReference>
<dbReference type="eggNOG" id="KOG3237">
    <property type="taxonomic scope" value="Eukaryota"/>
</dbReference>
<dbReference type="HOGENOM" id="CLU_061887_1_0_1"/>
<dbReference type="InParanoid" id="Q9M223"/>
<dbReference type="OMA" id="DLKYVVM"/>
<dbReference type="OrthoDB" id="29058at2759"/>
<dbReference type="PhylomeDB" id="Q9M223"/>
<dbReference type="CD-CODE" id="4299E36E">
    <property type="entry name" value="Nucleolus"/>
</dbReference>
<dbReference type="PRO" id="PR:Q9M223"/>
<dbReference type="Proteomes" id="UP000006548">
    <property type="component" value="Chromosome 3"/>
</dbReference>
<dbReference type="ExpressionAtlas" id="Q9M223">
    <property type="expression patterns" value="baseline and differential"/>
</dbReference>
<dbReference type="GO" id="GO:0005730">
    <property type="term" value="C:nucleolus"/>
    <property type="evidence" value="ECO:0007669"/>
    <property type="project" value="UniProtKB-SubCell"/>
</dbReference>
<dbReference type="GO" id="GO:0032040">
    <property type="term" value="C:small-subunit processome"/>
    <property type="evidence" value="ECO:0007669"/>
    <property type="project" value="InterPro"/>
</dbReference>
<dbReference type="GO" id="GO:0009561">
    <property type="term" value="P:megagametogenesis"/>
    <property type="evidence" value="ECO:0000315"/>
    <property type="project" value="TAIR"/>
</dbReference>
<dbReference type="GO" id="GO:0006364">
    <property type="term" value="P:rRNA processing"/>
    <property type="evidence" value="ECO:0007669"/>
    <property type="project" value="UniProtKB-KW"/>
</dbReference>
<dbReference type="InterPro" id="IPR007144">
    <property type="entry name" value="SSU_processome_Utp11"/>
</dbReference>
<dbReference type="PANTHER" id="PTHR12838">
    <property type="entry name" value="U3 SMALL NUCLEOLAR RNA-ASSOCIATED PROTEIN 11"/>
    <property type="match status" value="1"/>
</dbReference>
<dbReference type="PANTHER" id="PTHR12838:SF0">
    <property type="entry name" value="U3 SMALL NUCLEOLAR RNA-ASSOCIATED PROTEIN 11-RELATED"/>
    <property type="match status" value="1"/>
</dbReference>
<dbReference type="Pfam" id="PF03998">
    <property type="entry name" value="Utp11"/>
    <property type="match status" value="1"/>
</dbReference>
<dbReference type="PIRSF" id="PIRSF015952">
    <property type="entry name" value="U3snoRNP11"/>
    <property type="match status" value="1"/>
</dbReference>
<name>UTP11_ARATH</name>